<reference key="1">
    <citation type="journal article" date="2004" name="Science">
        <title>The genomic sequence of the accidental pathogen Legionella pneumophila.</title>
        <authorList>
            <person name="Chien M."/>
            <person name="Morozova I."/>
            <person name="Shi S."/>
            <person name="Sheng H."/>
            <person name="Chen J."/>
            <person name="Gomez S.M."/>
            <person name="Asamani G."/>
            <person name="Hill K."/>
            <person name="Nuara J."/>
            <person name="Feder M."/>
            <person name="Rineer J."/>
            <person name="Greenberg J.J."/>
            <person name="Steshenko V."/>
            <person name="Park S.H."/>
            <person name="Zhao B."/>
            <person name="Teplitskaya E."/>
            <person name="Edwards J.R."/>
            <person name="Pampou S."/>
            <person name="Georghiou A."/>
            <person name="Chou I.-C."/>
            <person name="Iannuccilli W."/>
            <person name="Ulz M.E."/>
            <person name="Kim D.H."/>
            <person name="Geringer-Sameth A."/>
            <person name="Goldsberry C."/>
            <person name="Morozov P."/>
            <person name="Fischer S.G."/>
            <person name="Segal G."/>
            <person name="Qu X."/>
            <person name="Rzhetsky A."/>
            <person name="Zhang P."/>
            <person name="Cayanis E."/>
            <person name="De Jong P.J."/>
            <person name="Ju J."/>
            <person name="Kalachikov S."/>
            <person name="Shuman H.A."/>
            <person name="Russo J.J."/>
        </authorList>
    </citation>
    <scope>NUCLEOTIDE SEQUENCE [LARGE SCALE GENOMIC DNA]</scope>
    <source>
        <strain>Philadelphia 1 / ATCC 33152 / DSM 7513</strain>
    </source>
</reference>
<gene>
    <name evidence="1" type="primary">murB</name>
    <name type="ordered locus">lpg2613</name>
</gene>
<dbReference type="EC" id="1.3.1.98" evidence="1"/>
<dbReference type="EMBL" id="AE017354">
    <property type="protein sequence ID" value="AAU28671.1"/>
    <property type="status" value="ALT_INIT"/>
    <property type="molecule type" value="Genomic_DNA"/>
</dbReference>
<dbReference type="RefSeq" id="WP_016357031.1">
    <property type="nucleotide sequence ID" value="NC_002942.5"/>
</dbReference>
<dbReference type="RefSeq" id="YP_096618.1">
    <property type="nucleotide sequence ID" value="NC_002942.5"/>
</dbReference>
<dbReference type="SMR" id="Q5ZSA6"/>
<dbReference type="STRING" id="272624.lpg2613"/>
<dbReference type="PaxDb" id="272624-lpg2613"/>
<dbReference type="GeneID" id="57036612"/>
<dbReference type="KEGG" id="lpn:lpg2613"/>
<dbReference type="PATRIC" id="fig|272624.6.peg.2788"/>
<dbReference type="eggNOG" id="COG0812">
    <property type="taxonomic scope" value="Bacteria"/>
</dbReference>
<dbReference type="HOGENOM" id="CLU_035304_1_1_6"/>
<dbReference type="OrthoDB" id="9804753at2"/>
<dbReference type="UniPathway" id="UPA00219"/>
<dbReference type="Proteomes" id="UP000000609">
    <property type="component" value="Chromosome"/>
</dbReference>
<dbReference type="GO" id="GO:0005829">
    <property type="term" value="C:cytosol"/>
    <property type="evidence" value="ECO:0007669"/>
    <property type="project" value="TreeGrafter"/>
</dbReference>
<dbReference type="GO" id="GO:0071949">
    <property type="term" value="F:FAD binding"/>
    <property type="evidence" value="ECO:0007669"/>
    <property type="project" value="InterPro"/>
</dbReference>
<dbReference type="GO" id="GO:0008762">
    <property type="term" value="F:UDP-N-acetylmuramate dehydrogenase activity"/>
    <property type="evidence" value="ECO:0007669"/>
    <property type="project" value="UniProtKB-UniRule"/>
</dbReference>
<dbReference type="GO" id="GO:0051301">
    <property type="term" value="P:cell division"/>
    <property type="evidence" value="ECO:0007669"/>
    <property type="project" value="UniProtKB-KW"/>
</dbReference>
<dbReference type="GO" id="GO:0071555">
    <property type="term" value="P:cell wall organization"/>
    <property type="evidence" value="ECO:0007669"/>
    <property type="project" value="UniProtKB-KW"/>
</dbReference>
<dbReference type="GO" id="GO:0009252">
    <property type="term" value="P:peptidoglycan biosynthetic process"/>
    <property type="evidence" value="ECO:0007669"/>
    <property type="project" value="UniProtKB-UniRule"/>
</dbReference>
<dbReference type="GO" id="GO:0008360">
    <property type="term" value="P:regulation of cell shape"/>
    <property type="evidence" value="ECO:0007669"/>
    <property type="project" value="UniProtKB-KW"/>
</dbReference>
<dbReference type="Gene3D" id="3.30.465.10">
    <property type="match status" value="1"/>
</dbReference>
<dbReference type="Gene3D" id="3.90.78.10">
    <property type="entry name" value="UDP-N-acetylenolpyruvoylglucosamine reductase, C-terminal domain"/>
    <property type="match status" value="1"/>
</dbReference>
<dbReference type="Gene3D" id="3.30.43.10">
    <property type="entry name" value="Uridine Diphospho-n-acetylenolpyruvylglucosamine Reductase, domain 2"/>
    <property type="match status" value="1"/>
</dbReference>
<dbReference type="HAMAP" id="MF_00037">
    <property type="entry name" value="MurB"/>
    <property type="match status" value="1"/>
</dbReference>
<dbReference type="InterPro" id="IPR016166">
    <property type="entry name" value="FAD-bd_PCMH"/>
</dbReference>
<dbReference type="InterPro" id="IPR036318">
    <property type="entry name" value="FAD-bd_PCMH-like_sf"/>
</dbReference>
<dbReference type="InterPro" id="IPR016167">
    <property type="entry name" value="FAD-bd_PCMH_sub1"/>
</dbReference>
<dbReference type="InterPro" id="IPR016169">
    <property type="entry name" value="FAD-bd_PCMH_sub2"/>
</dbReference>
<dbReference type="InterPro" id="IPR003170">
    <property type="entry name" value="MurB"/>
</dbReference>
<dbReference type="InterPro" id="IPR011601">
    <property type="entry name" value="MurB_C"/>
</dbReference>
<dbReference type="InterPro" id="IPR036635">
    <property type="entry name" value="MurB_C_sf"/>
</dbReference>
<dbReference type="InterPro" id="IPR006094">
    <property type="entry name" value="Oxid_FAD_bind_N"/>
</dbReference>
<dbReference type="NCBIfam" id="TIGR00179">
    <property type="entry name" value="murB"/>
    <property type="match status" value="1"/>
</dbReference>
<dbReference type="NCBIfam" id="NF010480">
    <property type="entry name" value="PRK13905.1"/>
    <property type="match status" value="1"/>
</dbReference>
<dbReference type="PANTHER" id="PTHR21071">
    <property type="entry name" value="UDP-N-ACETYLENOLPYRUVOYLGLUCOSAMINE REDUCTASE"/>
    <property type="match status" value="1"/>
</dbReference>
<dbReference type="PANTHER" id="PTHR21071:SF4">
    <property type="entry name" value="UDP-N-ACETYLENOLPYRUVOYLGLUCOSAMINE REDUCTASE"/>
    <property type="match status" value="1"/>
</dbReference>
<dbReference type="Pfam" id="PF01565">
    <property type="entry name" value="FAD_binding_4"/>
    <property type="match status" value="1"/>
</dbReference>
<dbReference type="Pfam" id="PF02873">
    <property type="entry name" value="MurB_C"/>
    <property type="match status" value="1"/>
</dbReference>
<dbReference type="SUPFAM" id="SSF56176">
    <property type="entry name" value="FAD-binding/transporter-associated domain-like"/>
    <property type="match status" value="1"/>
</dbReference>
<dbReference type="SUPFAM" id="SSF56194">
    <property type="entry name" value="Uridine diphospho-N-Acetylenolpyruvylglucosamine reductase, MurB, C-terminal domain"/>
    <property type="match status" value="1"/>
</dbReference>
<dbReference type="PROSITE" id="PS51387">
    <property type="entry name" value="FAD_PCMH"/>
    <property type="match status" value="1"/>
</dbReference>
<accession>Q5ZSA6</accession>
<proteinExistence type="inferred from homology"/>
<evidence type="ECO:0000255" key="1">
    <source>
        <dbReference type="HAMAP-Rule" id="MF_00037"/>
    </source>
</evidence>
<evidence type="ECO:0000305" key="2"/>
<keyword id="KW-0131">Cell cycle</keyword>
<keyword id="KW-0132">Cell division</keyword>
<keyword id="KW-0133">Cell shape</keyword>
<keyword id="KW-0961">Cell wall biogenesis/degradation</keyword>
<keyword id="KW-0963">Cytoplasm</keyword>
<keyword id="KW-0274">FAD</keyword>
<keyword id="KW-0285">Flavoprotein</keyword>
<keyword id="KW-0521">NADP</keyword>
<keyword id="KW-0560">Oxidoreductase</keyword>
<keyword id="KW-0573">Peptidoglycan synthesis</keyword>
<keyword id="KW-1185">Reference proteome</keyword>
<comment type="function">
    <text evidence="1">Cell wall formation.</text>
</comment>
<comment type="catalytic activity">
    <reaction evidence="1">
        <text>UDP-N-acetyl-alpha-D-muramate + NADP(+) = UDP-N-acetyl-3-O-(1-carboxyvinyl)-alpha-D-glucosamine + NADPH + H(+)</text>
        <dbReference type="Rhea" id="RHEA:12248"/>
        <dbReference type="ChEBI" id="CHEBI:15378"/>
        <dbReference type="ChEBI" id="CHEBI:57783"/>
        <dbReference type="ChEBI" id="CHEBI:58349"/>
        <dbReference type="ChEBI" id="CHEBI:68483"/>
        <dbReference type="ChEBI" id="CHEBI:70757"/>
        <dbReference type="EC" id="1.3.1.98"/>
    </reaction>
</comment>
<comment type="cofactor">
    <cofactor evidence="1">
        <name>FAD</name>
        <dbReference type="ChEBI" id="CHEBI:57692"/>
    </cofactor>
</comment>
<comment type="pathway">
    <text evidence="1">Cell wall biogenesis; peptidoglycan biosynthesis.</text>
</comment>
<comment type="subcellular location">
    <subcellularLocation>
        <location evidence="1">Cytoplasm</location>
    </subcellularLocation>
</comment>
<comment type="similarity">
    <text evidence="1">Belongs to the MurB family.</text>
</comment>
<comment type="sequence caution" evidence="2">
    <conflict type="erroneous initiation">
        <sequence resource="EMBL-CDS" id="AAU28671"/>
    </conflict>
</comment>
<organism>
    <name type="scientific">Legionella pneumophila subsp. pneumophila (strain Philadelphia 1 / ATCC 33152 / DSM 7513)</name>
    <dbReference type="NCBI Taxonomy" id="272624"/>
    <lineage>
        <taxon>Bacteria</taxon>
        <taxon>Pseudomonadati</taxon>
        <taxon>Pseudomonadota</taxon>
        <taxon>Gammaproteobacteria</taxon>
        <taxon>Legionellales</taxon>
        <taxon>Legionellaceae</taxon>
        <taxon>Legionella</taxon>
    </lineage>
</organism>
<feature type="chain" id="PRO_0000224693" description="UDP-N-acetylenolpyruvoylglucosamine reductase">
    <location>
        <begin position="1"/>
        <end position="308"/>
    </location>
</feature>
<feature type="domain" description="FAD-binding PCMH-type" evidence="1">
    <location>
        <begin position="32"/>
        <end position="196"/>
    </location>
</feature>
<feature type="active site" evidence="1">
    <location>
        <position position="176"/>
    </location>
</feature>
<feature type="active site" description="Proton donor" evidence="1">
    <location>
        <position position="225"/>
    </location>
</feature>
<feature type="active site" evidence="1">
    <location>
        <position position="296"/>
    </location>
</feature>
<name>MURB_LEGPH</name>
<sequence length="308" mass="33449">MSITGMDSSHVTESQGTLLFNEPLAEYTTWRVGGPAARLYKPANIDDLALFLSRLPFDEPLLWLGLGSNSLIRDGGFSGTVILTQGCLKEMTLLSDNCIRVEAGVSCASMARFSARNNLSGGEFWAGIPGTMGGALRMNAGCHGGETWQSVIEVQTINRRGEIRTRKPEEFEVAYRHVAGLGDEWFISAKLQLSPGNKETSLQLIKDLLAHRAKTQPTNEYNCGSVFRNPPGDFAARLIESCGLKGVSIGGAVVSEKHANFIINHQGTATAANIEALIHLVQTKVREQTSIELIREVHIIGDANVQTR</sequence>
<protein>
    <recommendedName>
        <fullName evidence="1">UDP-N-acetylenolpyruvoylglucosamine reductase</fullName>
        <ecNumber evidence="1">1.3.1.98</ecNumber>
    </recommendedName>
    <alternativeName>
        <fullName evidence="1">UDP-N-acetylmuramate dehydrogenase</fullName>
    </alternativeName>
</protein>